<comment type="function">
    <text evidence="1">Catalyzes the conversion of (8S)-3',8-cyclo-7,8-dihydroguanosine 5'-triphosphate to cyclic pyranopterin monophosphate (cPMP).</text>
</comment>
<comment type="catalytic activity">
    <reaction evidence="1">
        <text>(8S)-3',8-cyclo-7,8-dihydroguanosine 5'-triphosphate = cyclic pyranopterin phosphate + diphosphate</text>
        <dbReference type="Rhea" id="RHEA:49580"/>
        <dbReference type="ChEBI" id="CHEBI:33019"/>
        <dbReference type="ChEBI" id="CHEBI:59648"/>
        <dbReference type="ChEBI" id="CHEBI:131766"/>
        <dbReference type="EC" id="4.6.1.17"/>
    </reaction>
</comment>
<comment type="pathway">
    <text evidence="1">Cofactor biosynthesis; molybdopterin biosynthesis.</text>
</comment>
<comment type="subunit">
    <text evidence="1">Homohexamer; trimer of dimers.</text>
</comment>
<comment type="similarity">
    <text evidence="1">Belongs to the MoaC family.</text>
</comment>
<accession>A7I9D1</accession>
<keyword id="KW-0456">Lyase</keyword>
<keyword id="KW-0501">Molybdenum cofactor biosynthesis</keyword>
<keyword id="KW-1185">Reference proteome</keyword>
<feature type="chain" id="PRO_1000054108" description="Probable cyclic pyranopterin monophosphate synthase">
    <location>
        <begin position="1"/>
        <end position="155"/>
    </location>
</feature>
<feature type="active site" evidence="1">
    <location>
        <position position="125"/>
    </location>
</feature>
<feature type="binding site" evidence="1">
    <location>
        <begin position="74"/>
        <end position="76"/>
    </location>
    <ligand>
        <name>substrate</name>
    </ligand>
</feature>
<feature type="binding site" evidence="1">
    <location>
        <begin position="110"/>
        <end position="111"/>
    </location>
    <ligand>
        <name>substrate</name>
    </ligand>
</feature>
<reference key="1">
    <citation type="journal article" date="2015" name="Microbiology">
        <title>Genome of Methanoregula boonei 6A8 reveals adaptations to oligotrophic peatland environments.</title>
        <authorList>
            <person name="Braeuer S."/>
            <person name="Cadillo-Quiroz H."/>
            <person name="Kyrpides N."/>
            <person name="Woyke T."/>
            <person name="Goodwin L."/>
            <person name="Detter C."/>
            <person name="Podell S."/>
            <person name="Yavitt J.B."/>
            <person name="Zinder S.H."/>
        </authorList>
    </citation>
    <scope>NUCLEOTIDE SEQUENCE [LARGE SCALE GENOMIC DNA]</scope>
    <source>
        <strain>DSM 21154 / JCM 14090 / 6A8</strain>
    </source>
</reference>
<organism>
    <name type="scientific">Methanoregula boonei (strain DSM 21154 / JCM 14090 / 6A8)</name>
    <dbReference type="NCBI Taxonomy" id="456442"/>
    <lineage>
        <taxon>Archaea</taxon>
        <taxon>Methanobacteriati</taxon>
        <taxon>Methanobacteriota</taxon>
        <taxon>Stenosarchaea group</taxon>
        <taxon>Methanomicrobia</taxon>
        <taxon>Methanomicrobiales</taxon>
        <taxon>Methanoregulaceae</taxon>
        <taxon>Methanoregula</taxon>
    </lineage>
</organism>
<sequence length="155" mass="16541">MVEFTHISDGRAQMVDISAKPDVVREAVAQGRIYLRPATLAAIREGSVVKGNVLATARVAATLAVKDTPRIIPMCHTIPLGAVTVDFTEGDGYIEATVVTKSTGKTGVEMEALTGVSVALLTIWDMVKSAEKDENGQYPVTCIEGIRVVEKKKGQ</sequence>
<name>MOAC_METB6</name>
<evidence type="ECO:0000255" key="1">
    <source>
        <dbReference type="HAMAP-Rule" id="MF_01224"/>
    </source>
</evidence>
<gene>
    <name evidence="1" type="primary">moaC</name>
    <name type="ordered locus">Mboo_1826</name>
</gene>
<protein>
    <recommendedName>
        <fullName evidence="1">Probable cyclic pyranopterin monophosphate synthase</fullName>
        <ecNumber evidence="1">4.6.1.17</ecNumber>
    </recommendedName>
    <alternativeName>
        <fullName evidence="1">Molybdenum cofactor biosynthesis protein C</fullName>
    </alternativeName>
</protein>
<proteinExistence type="inferred from homology"/>
<dbReference type="EC" id="4.6.1.17" evidence="1"/>
<dbReference type="EMBL" id="CP000780">
    <property type="protein sequence ID" value="ABS56342.1"/>
    <property type="molecule type" value="Genomic_DNA"/>
</dbReference>
<dbReference type="RefSeq" id="WP_012107393.1">
    <property type="nucleotide sequence ID" value="NC_009712.1"/>
</dbReference>
<dbReference type="SMR" id="A7I9D1"/>
<dbReference type="STRING" id="456442.Mboo_1826"/>
<dbReference type="GeneID" id="5411042"/>
<dbReference type="KEGG" id="mbn:Mboo_1826"/>
<dbReference type="eggNOG" id="arCOG01530">
    <property type="taxonomic scope" value="Archaea"/>
</dbReference>
<dbReference type="HOGENOM" id="CLU_074693_1_2_2"/>
<dbReference type="OrthoDB" id="10067at2157"/>
<dbReference type="UniPathway" id="UPA00344"/>
<dbReference type="Proteomes" id="UP000002408">
    <property type="component" value="Chromosome"/>
</dbReference>
<dbReference type="GO" id="GO:0061799">
    <property type="term" value="F:cyclic pyranopterin monophosphate synthase activity"/>
    <property type="evidence" value="ECO:0007669"/>
    <property type="project" value="UniProtKB-UniRule"/>
</dbReference>
<dbReference type="GO" id="GO:0006777">
    <property type="term" value="P:Mo-molybdopterin cofactor biosynthetic process"/>
    <property type="evidence" value="ECO:0007669"/>
    <property type="project" value="UniProtKB-UniRule"/>
</dbReference>
<dbReference type="CDD" id="cd01419">
    <property type="entry name" value="MoaC_A"/>
    <property type="match status" value="1"/>
</dbReference>
<dbReference type="Gene3D" id="3.30.70.640">
    <property type="entry name" value="Molybdopterin cofactor biosynthesis C (MoaC) domain"/>
    <property type="match status" value="1"/>
</dbReference>
<dbReference type="HAMAP" id="MF_01224_A">
    <property type="entry name" value="MoaC_A"/>
    <property type="match status" value="1"/>
</dbReference>
<dbReference type="InterPro" id="IPR023047">
    <property type="entry name" value="Mo_CF_biosynth-C_arc"/>
</dbReference>
<dbReference type="InterPro" id="IPR023045">
    <property type="entry name" value="MoaC"/>
</dbReference>
<dbReference type="InterPro" id="IPR036522">
    <property type="entry name" value="MoaC_sf"/>
</dbReference>
<dbReference type="InterPro" id="IPR002820">
    <property type="entry name" value="Mopterin_CF_biosynth-C_dom"/>
</dbReference>
<dbReference type="NCBIfam" id="TIGR00581">
    <property type="entry name" value="moaC"/>
    <property type="match status" value="1"/>
</dbReference>
<dbReference type="NCBIfam" id="NF008999">
    <property type="entry name" value="PRK12343.1"/>
    <property type="match status" value="1"/>
</dbReference>
<dbReference type="Pfam" id="PF01967">
    <property type="entry name" value="MoaC"/>
    <property type="match status" value="1"/>
</dbReference>
<dbReference type="SUPFAM" id="SSF55040">
    <property type="entry name" value="Molybdenum cofactor biosynthesis protein C, MoaC"/>
    <property type="match status" value="1"/>
</dbReference>